<organism>
    <name type="scientific">Pongo abelii</name>
    <name type="common">Sumatran orangutan</name>
    <name type="synonym">Pongo pygmaeus abelii</name>
    <dbReference type="NCBI Taxonomy" id="9601"/>
    <lineage>
        <taxon>Eukaryota</taxon>
        <taxon>Metazoa</taxon>
        <taxon>Chordata</taxon>
        <taxon>Craniata</taxon>
        <taxon>Vertebrata</taxon>
        <taxon>Euteleostomi</taxon>
        <taxon>Mammalia</taxon>
        <taxon>Eutheria</taxon>
        <taxon>Euarchontoglires</taxon>
        <taxon>Primates</taxon>
        <taxon>Haplorrhini</taxon>
        <taxon>Catarrhini</taxon>
        <taxon>Hominidae</taxon>
        <taxon>Pongo</taxon>
    </lineage>
</organism>
<dbReference type="EMBL" id="CR858317">
    <property type="protein sequence ID" value="CAH90554.1"/>
    <property type="molecule type" value="mRNA"/>
</dbReference>
<dbReference type="RefSeq" id="NP_001127301.1">
    <property type="nucleotide sequence ID" value="NM_001133829.1"/>
</dbReference>
<dbReference type="RefSeq" id="XP_009235163.1">
    <property type="nucleotide sequence ID" value="XM_009236888.4"/>
</dbReference>
<dbReference type="RefSeq" id="XP_009235164.1">
    <property type="nucleotide sequence ID" value="XM_009236889.1"/>
</dbReference>
<dbReference type="RefSeq" id="XP_054377716.1">
    <property type="nucleotide sequence ID" value="XM_054521741.2"/>
</dbReference>
<dbReference type="RefSeq" id="XP_054377717.1">
    <property type="nucleotide sequence ID" value="XM_054521742.2"/>
</dbReference>
<dbReference type="SMR" id="Q5RCF3"/>
<dbReference type="FunCoup" id="Q5RCF3">
    <property type="interactions" value="3185"/>
</dbReference>
<dbReference type="STRING" id="9601.ENSPPYP00000022294"/>
<dbReference type="Ensembl" id="ENSPPYT00000045229.1">
    <property type="protein sequence ID" value="ENSPPYP00000038250.1"/>
    <property type="gene ID" value="ENSPPYG00000019905.3"/>
</dbReference>
<dbReference type="GeneID" id="100174361"/>
<dbReference type="KEGG" id="pon:100174361"/>
<dbReference type="CTD" id="8453"/>
<dbReference type="eggNOG" id="KOG2284">
    <property type="taxonomic scope" value="Eukaryota"/>
</dbReference>
<dbReference type="GeneTree" id="ENSGT00940000154926"/>
<dbReference type="HOGENOM" id="CLU_004747_6_1_1"/>
<dbReference type="InParanoid" id="Q5RCF3"/>
<dbReference type="OrthoDB" id="27073at2759"/>
<dbReference type="TreeFam" id="TF101152"/>
<dbReference type="UniPathway" id="UPA00143"/>
<dbReference type="Proteomes" id="UP000001595">
    <property type="component" value="Chromosome 10"/>
</dbReference>
<dbReference type="GO" id="GO:0031461">
    <property type="term" value="C:cullin-RING ubiquitin ligase complex"/>
    <property type="evidence" value="ECO:0007669"/>
    <property type="project" value="InterPro"/>
</dbReference>
<dbReference type="GO" id="GO:0005634">
    <property type="term" value="C:nucleus"/>
    <property type="evidence" value="ECO:0007669"/>
    <property type="project" value="UniProtKB-SubCell"/>
</dbReference>
<dbReference type="GO" id="GO:0031625">
    <property type="term" value="F:ubiquitin protein ligase binding"/>
    <property type="evidence" value="ECO:0007669"/>
    <property type="project" value="InterPro"/>
</dbReference>
<dbReference type="GO" id="GO:0010498">
    <property type="term" value="P:proteasomal protein catabolic process"/>
    <property type="evidence" value="ECO:0007669"/>
    <property type="project" value="UniProtKB-ARBA"/>
</dbReference>
<dbReference type="GO" id="GO:0016567">
    <property type="term" value="P:protein ubiquitination"/>
    <property type="evidence" value="ECO:0007669"/>
    <property type="project" value="UniProtKB-UniPathway"/>
</dbReference>
<dbReference type="GO" id="GO:0006511">
    <property type="term" value="P:ubiquitin-dependent protein catabolic process"/>
    <property type="evidence" value="ECO:0007669"/>
    <property type="project" value="InterPro"/>
</dbReference>
<dbReference type="FunFam" id="1.10.10.10:FF:000014">
    <property type="entry name" value="Cullin 1"/>
    <property type="match status" value="1"/>
</dbReference>
<dbReference type="FunFam" id="1.20.1310.10:FF:000012">
    <property type="entry name" value="Cullin 2"/>
    <property type="match status" value="1"/>
</dbReference>
<dbReference type="FunFam" id="1.20.1310.10:FF:000016">
    <property type="entry name" value="Cullin 2"/>
    <property type="match status" value="1"/>
</dbReference>
<dbReference type="FunFam" id="1.20.1310.10:FF:000018">
    <property type="entry name" value="Cullin 2"/>
    <property type="match status" value="1"/>
</dbReference>
<dbReference type="FunFam" id="3.30.230.130:FF:000003">
    <property type="entry name" value="Cullin 2"/>
    <property type="match status" value="1"/>
</dbReference>
<dbReference type="FunFam" id="4.10.1030.10:FF:000002">
    <property type="entry name" value="cullin homolog 1"/>
    <property type="match status" value="1"/>
</dbReference>
<dbReference type="FunFam" id="1.20.1310.10:FF:000022">
    <property type="entry name" value="Cullin-2 isoform 2"/>
    <property type="match status" value="1"/>
</dbReference>
<dbReference type="Gene3D" id="1.20.1310.10">
    <property type="entry name" value="Cullin Repeats"/>
    <property type="match status" value="4"/>
</dbReference>
<dbReference type="Gene3D" id="3.30.230.130">
    <property type="entry name" value="Cullin, Chain C, Domain 2"/>
    <property type="match status" value="1"/>
</dbReference>
<dbReference type="Gene3D" id="1.10.10.10">
    <property type="entry name" value="Winged helix-like DNA-binding domain superfamily/Winged helix DNA-binding domain"/>
    <property type="match status" value="1"/>
</dbReference>
<dbReference type="InterPro" id="IPR045093">
    <property type="entry name" value="Cullin"/>
</dbReference>
<dbReference type="InterPro" id="IPR016157">
    <property type="entry name" value="Cullin_CS"/>
</dbReference>
<dbReference type="InterPro" id="IPR016158">
    <property type="entry name" value="Cullin_homology"/>
</dbReference>
<dbReference type="InterPro" id="IPR036317">
    <property type="entry name" value="Cullin_homology_sf"/>
</dbReference>
<dbReference type="InterPro" id="IPR001373">
    <property type="entry name" value="Cullin_N"/>
</dbReference>
<dbReference type="InterPro" id="IPR019559">
    <property type="entry name" value="Cullin_neddylation_domain"/>
</dbReference>
<dbReference type="InterPro" id="IPR016159">
    <property type="entry name" value="Cullin_repeat-like_dom_sf"/>
</dbReference>
<dbReference type="InterPro" id="IPR036388">
    <property type="entry name" value="WH-like_DNA-bd_sf"/>
</dbReference>
<dbReference type="InterPro" id="IPR036390">
    <property type="entry name" value="WH_DNA-bd_sf"/>
</dbReference>
<dbReference type="PANTHER" id="PTHR11932">
    <property type="entry name" value="CULLIN"/>
    <property type="match status" value="1"/>
</dbReference>
<dbReference type="Pfam" id="PF00888">
    <property type="entry name" value="Cullin"/>
    <property type="match status" value="1"/>
</dbReference>
<dbReference type="Pfam" id="PF10557">
    <property type="entry name" value="Cullin_Nedd8"/>
    <property type="match status" value="1"/>
</dbReference>
<dbReference type="SMART" id="SM00182">
    <property type="entry name" value="CULLIN"/>
    <property type="match status" value="1"/>
</dbReference>
<dbReference type="SMART" id="SM00884">
    <property type="entry name" value="Cullin_Nedd8"/>
    <property type="match status" value="1"/>
</dbReference>
<dbReference type="SUPFAM" id="SSF75632">
    <property type="entry name" value="Cullin homology domain"/>
    <property type="match status" value="1"/>
</dbReference>
<dbReference type="SUPFAM" id="SSF74788">
    <property type="entry name" value="Cullin repeat-like"/>
    <property type="match status" value="1"/>
</dbReference>
<dbReference type="SUPFAM" id="SSF46785">
    <property type="entry name" value="Winged helix' DNA-binding domain"/>
    <property type="match status" value="1"/>
</dbReference>
<dbReference type="PROSITE" id="PS01256">
    <property type="entry name" value="CULLIN_1"/>
    <property type="match status" value="1"/>
</dbReference>
<dbReference type="PROSITE" id="PS50069">
    <property type="entry name" value="CULLIN_2"/>
    <property type="match status" value="1"/>
</dbReference>
<protein>
    <recommendedName>
        <fullName>Cullin-2</fullName>
        <shortName>CUL-2</shortName>
    </recommendedName>
</protein>
<accession>Q5RCF3</accession>
<gene>
    <name type="primary">CUL2</name>
</gene>
<name>CUL2_PONAB</name>
<reference key="1">
    <citation type="submission" date="2004-11" db="EMBL/GenBank/DDBJ databases">
        <authorList>
            <consortium name="The German cDNA consortium"/>
        </authorList>
    </citation>
    <scope>NUCLEOTIDE SEQUENCE [LARGE SCALE MRNA]</scope>
    <source>
        <tissue>Heart</tissue>
    </source>
</reference>
<comment type="function">
    <text evidence="2 3">Core component of multiple cullin-RING-based ECS (ElonginB/C-CUL2/5-SOCS-box protein) E3 ubiquitin-protein ligase complexes, which mediate the ubiquitination of target proteins. CUL2 may serve as a rigid scaffold in the complex and may contribute to catalysis through positioning of the substrate and the ubiquitin-conjugating enzyme. The E3 ubiquitin-protein ligase activity of the complex is dependent on the neddylation of the cullin subunit and is inhibited by the association of the deneddylated cullin subunit with TIP120A/CAND1. The functional specificity of the ECS complex depends on the substrate recognition component. ECS(VHL) mediates the ubiquitination of hypoxia-inducible factor (HIF). A number of ECS complexes (containing either KLHDC2, KLHDC3, KLHDC10, APPBP2, FEM1A, FEM1B or FEM1C as substrate-recognition component) are part of the DesCEND (destruction via C-end degrons) pathway, which recognizes a C-degron located at the extreme C terminus of target proteins, leading to their ubiquitination and degradation. ECS complexes and ARIH1 collaborate in tandem to mediate ubiquitination of target proteins (By similarity). ECS(LRR1) ubiquitinates MCM7 and promotes CMG replisome disassembly by VCP and chromatin extraction during S-phase (By similarity).</text>
</comment>
<comment type="pathway">
    <text evidence="2">Protein modification; protein ubiquitination.</text>
</comment>
<comment type="subunit">
    <text evidence="2">Component of multiple Cul2-RING (CRL2) E3 ubiquitin-protein ligase complexes consisting of CUL2, Elongin BC (ELOB and ELOC), RBX1 and a variable substrate-specific adapter; this complex is also known as ECS (Elongin BC-CUL2/5-SOCS-box protein) complex and may consist of CUL2 or CUL5 (By similarity). Component of the ECS(VHL) or CBC(VHL) complex containing CUL2, RBX1, ELOB, ELOC and VHL (By similarity). Component of the ECS(MED8) complex with the probable substrate recognition component MED8 (By similarity). Component of multiple ECS complexes part of the DesCEND (destruction via C-end degrons) pathway, which contain either KLHDC2, KLHDC3, KLHDC10, APPBP2, FEM1A, FEM1B or FEM1C as substrate-recognition component (By similarity). Component of the ECS(LRR1) complex with the substrate recognition component LRR1 (By similarity). Component of a CRL2(FEM1B) complex containing CUL2, RBX1, ELOB, ELOC and FEM1B (By similarity). Component of a CRL2(FEM1C) complex containing CUL2, RBX1, ELOB, ELOC and FEM1C (By similarity). Part of an E3 ubiquitin-protein ligase complex including ZYG11B, CUL2 and Elongin BC (By similarity). Part of an E3 ubiquitin-protein ligase complex including ZER1, CUL2 and Elongin BC (By similarity). Interacts with RBX1, RNF7, FEM1B and TIP120A/CAND1 (By similarity). Found in a complex composed of LIMD1, VHL, EGLN1/PHD2, ELOB and CUL2 (By similarity). Interacts (when neddylated) with ARIH1; leading to activate the E3 ligase activity of ARIH1. Interacts (unneddylated form) with DCUN1D1, DCUN1D2, DCUN1D3, DCUN1D4 and DCUN1D5; these interactions promote the cullin neddylation (By similarity). Component of VCB (elongins BC/CUL2/VHL) complex that contains at least DCUN1D1, CUL2 and VHL; this complex triggers CUL2 neddylation and consequently cullin ring ligase (CRL) substrates polyubiquitylation (By similarity).</text>
</comment>
<comment type="subcellular location">
    <subcellularLocation>
        <location evidence="3">Nucleus</location>
    </subcellularLocation>
</comment>
<comment type="domain">
    <text evidence="2">The Cullin neddylation domain restrains the RING domain of RBX1 in the E3 ubiquitin-protein ligase complex; this restraint is removed upon neddylation of the cullin.</text>
</comment>
<comment type="PTM">
    <text evidence="2 3">Neddylated; which enhances the ubiquitination activity of ECS (Elongin BC-CUL2/5-SOCS-box protein) E3 ubiquitin-protein ligase complexes (By similarity). Neddylation leads to structural rearrangment in the complex that allows interaction between the E2 ubiquitin-conjugating enzyme and the acceptor ubiquitin (By similarity). CBC(VHL) complex formation seems to promote neddylation. Deneddylated via its interaction with the COP9 signalosome (CSN) complex (By similarity).</text>
</comment>
<comment type="similarity">
    <text evidence="5">Belongs to the cullin family.</text>
</comment>
<proteinExistence type="evidence at transcript level"/>
<sequence length="745" mass="86983">MSLKPRVVDFDETWNKLLTTIKAVVMLEYVERATWNDRFSDIYALCVAYPEPLGERLYTETKIFLENHVRHLHKRVLESEEQVLVMYHRYWEEYSKGADYMDCLYRYLNTQFIKKNKLTEADLQYGYGGVDMNEPLMEIGELALDMWRKLMVEPLQAILIRMLLREIKNDRGGEDPNQKVIHGVINSFVHVEQYKKKFPLKFYQEIFESPFLTETGEYYKQEASNLLQESNCSQYMEKVLGRLKDEEIRCRKYLHPSSYTKVIHECQQRMVADHLQFLHAECHNIIRQEKKNDMANMYVLLRAVSTGLPHMIQELQNHIHDEGLRATSNLTQENMPTLFVESVLEVHGKFVQLINTVLNGDQHFMSALDKALTSVVNYREPKSVCKAPELLAKYCDNLLKKSAKGMTENEVEDRLTSFITVFKYIDDKDVFQKFYARMLAKRLIHGLSMSMDSEEAMINKLKQACGYEFTSKLHRMYTDMSVSADLNNKFNNFIKNQDTVIDLGISFQIYVLQAGAWPLTQAPSSTFAIPQELEKSVQMFELFYSQHFSGRKLTWLHYLCTGEVKMNYLGKPYVAMVTTYQMAVLLAFNNSETVSYKELQDSTQMNEKELTKTIKSLLDVKMINHDSEKEDIDAESSFSLNMNFSSKRTKFKITTSMQKDTPQEMEQTRSAVDEDRKMYLQAAIVRIMKARKVLRHNALIQEVISQSRARFNPSISMIKKCIEVLIDKQYIERSQASADEYSYVA</sequence>
<feature type="chain" id="PRO_0000119792" description="Cullin-2">
    <location>
        <begin position="1"/>
        <end position="745"/>
    </location>
</feature>
<feature type="domain" description="Cullin neddylation" evidence="4">
    <location>
        <begin position="675"/>
        <end position="735"/>
    </location>
</feature>
<feature type="modified residue" description="N6-acetyllysine" evidence="2">
    <location>
        <position position="393"/>
    </location>
</feature>
<feature type="modified residue" description="Phosphothreonine" evidence="2">
    <location>
        <position position="661"/>
    </location>
</feature>
<feature type="cross-link" description="Glycyl lysine isopeptide (Lys-Gly) (interchain with G-Cter in NEDD8)" evidence="1">
    <location>
        <position position="689"/>
    </location>
</feature>
<keyword id="KW-0007">Acetylation</keyword>
<keyword id="KW-1017">Isopeptide bond</keyword>
<keyword id="KW-0539">Nucleus</keyword>
<keyword id="KW-0597">Phosphoprotein</keyword>
<keyword id="KW-1185">Reference proteome</keyword>
<keyword id="KW-0832">Ubl conjugation</keyword>
<keyword id="KW-0833">Ubl conjugation pathway</keyword>
<evidence type="ECO:0000250" key="1">
    <source>
        <dbReference type="UniProtKB" id="Q13616"/>
    </source>
</evidence>
<evidence type="ECO:0000250" key="2">
    <source>
        <dbReference type="UniProtKB" id="Q13617"/>
    </source>
</evidence>
<evidence type="ECO:0000250" key="3">
    <source>
        <dbReference type="UniProtKB" id="Q9D4H8"/>
    </source>
</evidence>
<evidence type="ECO:0000255" key="4"/>
<evidence type="ECO:0000255" key="5">
    <source>
        <dbReference type="PROSITE-ProRule" id="PRU00330"/>
    </source>
</evidence>